<name>HUTG_COREF</name>
<comment type="function">
    <text evidence="1">Catalyzes the conversion of N-formimidoyl-L-glutamate to L-glutamate and formamide.</text>
</comment>
<comment type="catalytic activity">
    <reaction evidence="1">
        <text>N-formimidoyl-L-glutamate + H2O = formamide + L-glutamate</text>
        <dbReference type="Rhea" id="RHEA:22492"/>
        <dbReference type="ChEBI" id="CHEBI:15377"/>
        <dbReference type="ChEBI" id="CHEBI:16397"/>
        <dbReference type="ChEBI" id="CHEBI:29985"/>
        <dbReference type="ChEBI" id="CHEBI:58928"/>
        <dbReference type="EC" id="3.5.3.8"/>
    </reaction>
</comment>
<comment type="cofactor">
    <cofactor evidence="1">
        <name>Mn(2+)</name>
        <dbReference type="ChEBI" id="CHEBI:29035"/>
    </cofactor>
    <text evidence="1">Binds 2 manganese ions per subunit.</text>
</comment>
<comment type="pathway">
    <text evidence="1">Amino-acid degradation; L-histidine degradation into L-glutamate; L-glutamate from N-formimidoyl-L-glutamate (hydrolase route): step 1/1.</text>
</comment>
<comment type="similarity">
    <text evidence="1">Belongs to the arginase family.</text>
</comment>
<reference key="1">
    <citation type="journal article" date="2003" name="Genome Res.">
        <title>Comparative complete genome sequence analysis of the amino acid replacements responsible for the thermostability of Corynebacterium efficiens.</title>
        <authorList>
            <person name="Nishio Y."/>
            <person name="Nakamura Y."/>
            <person name="Kawarabayasi Y."/>
            <person name="Usuda Y."/>
            <person name="Kimura E."/>
            <person name="Sugimoto S."/>
            <person name="Matsui K."/>
            <person name="Yamagishi A."/>
            <person name="Kikuchi H."/>
            <person name="Ikeo K."/>
            <person name="Gojobori T."/>
        </authorList>
    </citation>
    <scope>NUCLEOTIDE SEQUENCE [LARGE SCALE GENOMIC DNA]</scope>
    <source>
        <strain>DSM 44549 / YS-314 / AJ 12310 / JCM 11189 / NBRC 100395</strain>
    </source>
</reference>
<proteinExistence type="inferred from homology"/>
<gene>
    <name evidence="1" type="primary">hutG</name>
    <name type="ordered locus">CE1257</name>
</gene>
<dbReference type="EC" id="3.5.3.8" evidence="1"/>
<dbReference type="EMBL" id="BA000035">
    <property type="protein sequence ID" value="BAC18067.1"/>
    <property type="molecule type" value="Genomic_DNA"/>
</dbReference>
<dbReference type="RefSeq" id="WP_006769217.1">
    <property type="nucleotide sequence ID" value="NC_004369.1"/>
</dbReference>
<dbReference type="SMR" id="Q8FQ76"/>
<dbReference type="STRING" id="196164.gene:10741665"/>
<dbReference type="KEGG" id="cef:CE1257"/>
<dbReference type="eggNOG" id="COG0010">
    <property type="taxonomic scope" value="Bacteria"/>
</dbReference>
<dbReference type="HOGENOM" id="CLU_039478_2_0_11"/>
<dbReference type="OrthoDB" id="9789727at2"/>
<dbReference type="UniPathway" id="UPA00379">
    <property type="reaction ID" value="UER00552"/>
</dbReference>
<dbReference type="Proteomes" id="UP000001409">
    <property type="component" value="Chromosome"/>
</dbReference>
<dbReference type="GO" id="GO:0008783">
    <property type="term" value="F:agmatinase activity"/>
    <property type="evidence" value="ECO:0007669"/>
    <property type="project" value="TreeGrafter"/>
</dbReference>
<dbReference type="GO" id="GO:0050415">
    <property type="term" value="F:formimidoylglutamase activity"/>
    <property type="evidence" value="ECO:0007669"/>
    <property type="project" value="UniProtKB-UniRule"/>
</dbReference>
<dbReference type="GO" id="GO:0030145">
    <property type="term" value="F:manganese ion binding"/>
    <property type="evidence" value="ECO:0007669"/>
    <property type="project" value="UniProtKB-UniRule"/>
</dbReference>
<dbReference type="GO" id="GO:0019556">
    <property type="term" value="P:L-histidine catabolic process to glutamate and formamide"/>
    <property type="evidence" value="ECO:0007669"/>
    <property type="project" value="UniProtKB-UniPathway"/>
</dbReference>
<dbReference type="GO" id="GO:0019557">
    <property type="term" value="P:L-histidine catabolic process to glutamate and formate"/>
    <property type="evidence" value="ECO:0007669"/>
    <property type="project" value="UniProtKB-UniPathway"/>
</dbReference>
<dbReference type="GO" id="GO:0033389">
    <property type="term" value="P:putrescine biosynthetic process from arginine, via agmatine"/>
    <property type="evidence" value="ECO:0007669"/>
    <property type="project" value="TreeGrafter"/>
</dbReference>
<dbReference type="CDD" id="cd09988">
    <property type="entry name" value="Formimidoylglutamase"/>
    <property type="match status" value="1"/>
</dbReference>
<dbReference type="Gene3D" id="3.40.800.10">
    <property type="entry name" value="Ureohydrolase domain"/>
    <property type="match status" value="1"/>
</dbReference>
<dbReference type="HAMAP" id="MF_00737">
    <property type="entry name" value="Formimidoylglutam"/>
    <property type="match status" value="1"/>
</dbReference>
<dbReference type="InterPro" id="IPR005923">
    <property type="entry name" value="HutG"/>
</dbReference>
<dbReference type="InterPro" id="IPR006035">
    <property type="entry name" value="Ureohydrolase"/>
</dbReference>
<dbReference type="InterPro" id="IPR023696">
    <property type="entry name" value="Ureohydrolase_dom_sf"/>
</dbReference>
<dbReference type="PANTHER" id="PTHR11358">
    <property type="entry name" value="ARGINASE/AGMATINASE"/>
    <property type="match status" value="1"/>
</dbReference>
<dbReference type="PANTHER" id="PTHR11358:SF35">
    <property type="entry name" value="FORMIMIDOYLGLUTAMASE"/>
    <property type="match status" value="1"/>
</dbReference>
<dbReference type="Pfam" id="PF00491">
    <property type="entry name" value="Arginase"/>
    <property type="match status" value="1"/>
</dbReference>
<dbReference type="SUPFAM" id="SSF52768">
    <property type="entry name" value="Arginase/deacetylase"/>
    <property type="match status" value="1"/>
</dbReference>
<dbReference type="PROSITE" id="PS51409">
    <property type="entry name" value="ARGINASE_2"/>
    <property type="match status" value="1"/>
</dbReference>
<keyword id="KW-0369">Histidine metabolism</keyword>
<keyword id="KW-0378">Hydrolase</keyword>
<keyword id="KW-0464">Manganese</keyword>
<keyword id="KW-0479">Metal-binding</keyword>
<keyword id="KW-1185">Reference proteome</keyword>
<feature type="chain" id="PRO_0000173753" description="Formimidoylglutamase">
    <location>
        <begin position="1"/>
        <end position="314"/>
    </location>
</feature>
<feature type="binding site" evidence="1">
    <location>
        <position position="127"/>
    </location>
    <ligand>
        <name>Mn(2+)</name>
        <dbReference type="ChEBI" id="CHEBI:29035"/>
        <label>1</label>
    </ligand>
</feature>
<feature type="binding site" evidence="1">
    <location>
        <position position="151"/>
    </location>
    <ligand>
        <name>Mn(2+)</name>
        <dbReference type="ChEBI" id="CHEBI:29035"/>
        <label>1</label>
    </ligand>
</feature>
<feature type="binding site" evidence="1">
    <location>
        <position position="151"/>
    </location>
    <ligand>
        <name>Mn(2+)</name>
        <dbReference type="ChEBI" id="CHEBI:29035"/>
        <label>2</label>
    </ligand>
</feature>
<feature type="binding site" evidence="1">
    <location>
        <position position="153"/>
    </location>
    <ligand>
        <name>Mn(2+)</name>
        <dbReference type="ChEBI" id="CHEBI:29035"/>
        <label>2</label>
    </ligand>
</feature>
<feature type="binding site" evidence="1">
    <location>
        <position position="155"/>
    </location>
    <ligand>
        <name>Mn(2+)</name>
        <dbReference type="ChEBI" id="CHEBI:29035"/>
        <label>1</label>
    </ligand>
</feature>
<feature type="binding site" evidence="1">
    <location>
        <position position="239"/>
    </location>
    <ligand>
        <name>Mn(2+)</name>
        <dbReference type="ChEBI" id="CHEBI:29035"/>
        <label>1</label>
    </ligand>
</feature>
<feature type="binding site" evidence="1">
    <location>
        <position position="239"/>
    </location>
    <ligand>
        <name>Mn(2+)</name>
        <dbReference type="ChEBI" id="CHEBI:29035"/>
        <label>2</label>
    </ligand>
</feature>
<feature type="binding site" evidence="1">
    <location>
        <position position="241"/>
    </location>
    <ligand>
        <name>Mn(2+)</name>
        <dbReference type="ChEBI" id="CHEBI:29035"/>
        <label>2</label>
    </ligand>
</feature>
<evidence type="ECO:0000255" key="1">
    <source>
        <dbReference type="HAMAP-Rule" id="MF_00737"/>
    </source>
</evidence>
<accession>Q8FQ76</accession>
<sequence>MENETFGTELPDTWVGRIDGDNPEHALWYTTVSPLPEPDEVEEGVVTLGFASDEGNLRNHGTAGAALGPDAIRGVLGLVAVHDARPRYDAGTIRVGGDLERGHDELSDAVETIARAGHLPIVLGGGHEAGFGSHRGIYRARGSSPAIINLDAHLDLRAAERPTNGTPFRQVRELVGEEFRYSVLGVSVPNNTDFLFNAAREFGTEVTTDDEINAMSPQEAADHALALVRDAEHIHLTVDIDVLSEALAPGTGSPAAVGVELGRIRAICTGLAATGRLTLVDVVEVNPRLDHNNQTARVAARLIHEIAEAHLKAT</sequence>
<organism>
    <name type="scientific">Corynebacterium efficiens (strain DSM 44549 / YS-314 / AJ 12310 / JCM 11189 / NBRC 100395)</name>
    <dbReference type="NCBI Taxonomy" id="196164"/>
    <lineage>
        <taxon>Bacteria</taxon>
        <taxon>Bacillati</taxon>
        <taxon>Actinomycetota</taxon>
        <taxon>Actinomycetes</taxon>
        <taxon>Mycobacteriales</taxon>
        <taxon>Corynebacteriaceae</taxon>
        <taxon>Corynebacterium</taxon>
    </lineage>
</organism>
<protein>
    <recommendedName>
        <fullName evidence="1">Formimidoylglutamase</fullName>
        <ecNumber evidence="1">3.5.3.8</ecNumber>
    </recommendedName>
    <alternativeName>
        <fullName evidence="1">Formiminoglutamase</fullName>
    </alternativeName>
    <alternativeName>
        <fullName evidence="1">Formiminoglutamate hydrolase</fullName>
    </alternativeName>
</protein>